<gene>
    <name type="primary">TIMM50</name>
    <name type="synonym">TIM50</name>
    <name type="ORF">PRO1512</name>
</gene>
<organism>
    <name type="scientific">Homo sapiens</name>
    <name type="common">Human</name>
    <dbReference type="NCBI Taxonomy" id="9606"/>
    <lineage>
        <taxon>Eukaryota</taxon>
        <taxon>Metazoa</taxon>
        <taxon>Chordata</taxon>
        <taxon>Craniata</taxon>
        <taxon>Vertebrata</taxon>
        <taxon>Euteleostomi</taxon>
        <taxon>Mammalia</taxon>
        <taxon>Eutheria</taxon>
        <taxon>Euarchontoglires</taxon>
        <taxon>Primates</taxon>
        <taxon>Haplorrhini</taxon>
        <taxon>Catarrhini</taxon>
        <taxon>Hominidae</taxon>
        <taxon>Homo</taxon>
    </lineage>
</organism>
<name>TIM50_HUMAN</name>
<dbReference type="EMBL" id="AY551341">
    <property type="protein sequence ID" value="AAT01208.1"/>
    <property type="molecule type" value="mRNA"/>
</dbReference>
<dbReference type="EMBL" id="AY444561">
    <property type="protein sequence ID" value="AAS68537.1"/>
    <property type="molecule type" value="mRNA"/>
</dbReference>
<dbReference type="EMBL" id="AC011500">
    <property type="status" value="NOT_ANNOTATED_CDS"/>
    <property type="molecule type" value="Genomic_DNA"/>
</dbReference>
<dbReference type="EMBL" id="BC009072">
    <property type="protein sequence ID" value="AAH09072.1"/>
    <property type="molecule type" value="mRNA"/>
</dbReference>
<dbReference type="EMBL" id="BC010736">
    <property type="protein sequence ID" value="AAH10736.1"/>
    <property type="molecule type" value="mRNA"/>
</dbReference>
<dbReference type="EMBL" id="BC050082">
    <property type="protein sequence ID" value="AAH50082.1"/>
    <property type="molecule type" value="mRNA"/>
</dbReference>
<dbReference type="EMBL" id="BC121146">
    <property type="protein sequence ID" value="AAI21147.1"/>
    <property type="molecule type" value="mRNA"/>
</dbReference>
<dbReference type="EMBL" id="AF130109">
    <property type="protein sequence ID" value="AAG35534.1"/>
    <property type="status" value="ALT_SEQ"/>
    <property type="molecule type" value="mRNA"/>
</dbReference>
<dbReference type="CCDS" id="CCDS33023.2">
    <molecule id="Q3ZCQ8-1"/>
</dbReference>
<dbReference type="RefSeq" id="NP_001001563.2">
    <molecule id="Q3ZCQ8-1"/>
    <property type="nucleotide sequence ID" value="NM_001001563.5"/>
</dbReference>
<dbReference type="RefSeq" id="NP_001316488.1">
    <molecule id="Q3ZCQ8-3"/>
    <property type="nucleotide sequence ID" value="NM_001329559.2"/>
</dbReference>
<dbReference type="SMR" id="Q3ZCQ8"/>
<dbReference type="BioGRID" id="124961">
    <property type="interactions" value="281"/>
</dbReference>
<dbReference type="ComplexPortal" id="CPX-6129">
    <property type="entry name" value="TIM23 mitochondrial inner membrane pre-sequence translocase complex, TIM17A variant"/>
</dbReference>
<dbReference type="ComplexPortal" id="CPX-6130">
    <property type="entry name" value="TIM23 mitochondrial inner membrane pre-sequence translocase complex, TIM17B variant"/>
</dbReference>
<dbReference type="CORUM" id="Q3ZCQ8"/>
<dbReference type="DIP" id="DIP-34058N"/>
<dbReference type="FunCoup" id="Q3ZCQ8">
    <property type="interactions" value="2880"/>
</dbReference>
<dbReference type="IntAct" id="Q3ZCQ8">
    <property type="interactions" value="159"/>
</dbReference>
<dbReference type="MINT" id="Q3ZCQ8"/>
<dbReference type="STRING" id="9606.ENSP00000445806"/>
<dbReference type="ChEMBL" id="CHEMBL4295842"/>
<dbReference type="DEPOD" id="TIMM50"/>
<dbReference type="GlyGen" id="Q3ZCQ8">
    <property type="glycosylation" value="1 site, 1 O-linked glycan (1 site)"/>
</dbReference>
<dbReference type="iPTMnet" id="Q3ZCQ8"/>
<dbReference type="PhosphoSitePlus" id="Q3ZCQ8"/>
<dbReference type="SwissPalm" id="Q3ZCQ8"/>
<dbReference type="BioMuta" id="TIMM50"/>
<dbReference type="DMDM" id="83305924"/>
<dbReference type="jPOST" id="Q3ZCQ8"/>
<dbReference type="MassIVE" id="Q3ZCQ8"/>
<dbReference type="PaxDb" id="9606-ENSP00000445806"/>
<dbReference type="PeptideAtlas" id="Q3ZCQ8"/>
<dbReference type="ProteomicsDB" id="61635"/>
<dbReference type="ProteomicsDB" id="61909">
    <molecule id="Q3ZCQ8-1"/>
</dbReference>
<dbReference type="ProteomicsDB" id="61910">
    <molecule id="Q3ZCQ8-2"/>
</dbReference>
<dbReference type="Pumba" id="Q3ZCQ8"/>
<dbReference type="TopDownProteomics" id="Q3ZCQ8-1">
    <molecule id="Q3ZCQ8-1"/>
</dbReference>
<dbReference type="TopDownProteomics" id="Q3ZCQ8-2">
    <molecule id="Q3ZCQ8-2"/>
</dbReference>
<dbReference type="Antibodypedia" id="30377">
    <property type="antibodies" value="183 antibodies from 31 providers"/>
</dbReference>
<dbReference type="DNASU" id="92609"/>
<dbReference type="Ensembl" id="ENST00000544017.5">
    <molecule id="Q3ZCQ8-2"/>
    <property type="protein sequence ID" value="ENSP00000445806.2"/>
    <property type="gene ID" value="ENSG00000105197.11"/>
</dbReference>
<dbReference type="Ensembl" id="ENST00000607714.6">
    <molecule id="Q3ZCQ8-1"/>
    <property type="protein sequence ID" value="ENSP00000475531.1"/>
    <property type="gene ID" value="ENSG00000105197.11"/>
</dbReference>
<dbReference type="GeneID" id="92609"/>
<dbReference type="KEGG" id="hsa:92609"/>
<dbReference type="MANE-Select" id="ENST00000607714.6">
    <property type="protein sequence ID" value="ENSP00000475531.1"/>
    <property type="RefSeq nucleotide sequence ID" value="NM_001001563.5"/>
    <property type="RefSeq protein sequence ID" value="NP_001001563.2"/>
</dbReference>
<dbReference type="UCSC" id="uc002olu.1">
    <molecule id="Q3ZCQ8-1"/>
    <property type="organism name" value="human"/>
</dbReference>
<dbReference type="AGR" id="HGNC:23656"/>
<dbReference type="CTD" id="92609"/>
<dbReference type="DisGeNET" id="92609"/>
<dbReference type="GeneCards" id="TIMM50"/>
<dbReference type="HGNC" id="HGNC:23656">
    <property type="gene designation" value="TIMM50"/>
</dbReference>
<dbReference type="HPA" id="ENSG00000105197">
    <property type="expression patterns" value="Low tissue specificity"/>
</dbReference>
<dbReference type="MalaCards" id="TIMM50"/>
<dbReference type="MIM" id="607381">
    <property type="type" value="gene"/>
</dbReference>
<dbReference type="MIM" id="617698">
    <property type="type" value="phenotype"/>
</dbReference>
<dbReference type="neXtProt" id="NX_Q3ZCQ8"/>
<dbReference type="OpenTargets" id="ENSG00000105197"/>
<dbReference type="Orphanet" id="505216">
    <property type="disease" value="3-methylglutaconic aciduria type 9"/>
</dbReference>
<dbReference type="PharmGKB" id="PA134902846"/>
<dbReference type="VEuPathDB" id="HostDB:ENSG00000105197"/>
<dbReference type="eggNOG" id="KOG2832">
    <property type="taxonomic scope" value="Eukaryota"/>
</dbReference>
<dbReference type="GeneTree" id="ENSGT01040000240503"/>
<dbReference type="HOGENOM" id="CLU_048293_1_1_1"/>
<dbReference type="InParanoid" id="Q3ZCQ8"/>
<dbReference type="OrthoDB" id="287041at2759"/>
<dbReference type="PAN-GO" id="Q3ZCQ8">
    <property type="GO annotations" value="2 GO annotations based on evolutionary models"/>
</dbReference>
<dbReference type="PhylomeDB" id="Q3ZCQ8"/>
<dbReference type="TreeFam" id="TF106198"/>
<dbReference type="PathwayCommons" id="Q3ZCQ8"/>
<dbReference type="Reactome" id="R-HSA-1268020">
    <property type="pathway name" value="Mitochondrial protein import"/>
</dbReference>
<dbReference type="SignaLink" id="Q3ZCQ8"/>
<dbReference type="SIGNOR" id="Q3ZCQ8"/>
<dbReference type="BioGRID-ORCS" id="92609">
    <property type="hits" value="144 hits in 1186 CRISPR screens"/>
</dbReference>
<dbReference type="CD-CODE" id="804901D1">
    <property type="entry name" value="Nuclear speckle"/>
</dbReference>
<dbReference type="CD-CODE" id="FB4E32DD">
    <property type="entry name" value="Presynaptic clusters and postsynaptic densities"/>
</dbReference>
<dbReference type="ChiTaRS" id="TIMM50">
    <property type="organism name" value="human"/>
</dbReference>
<dbReference type="GeneWiki" id="TIMM50"/>
<dbReference type="GenomeRNAi" id="92609"/>
<dbReference type="Pharos" id="Q3ZCQ8">
    <property type="development level" value="Tbio"/>
</dbReference>
<dbReference type="PRO" id="PR:Q3ZCQ8"/>
<dbReference type="Proteomes" id="UP000005640">
    <property type="component" value="Chromosome 19"/>
</dbReference>
<dbReference type="RNAct" id="Q3ZCQ8">
    <property type="molecule type" value="protein"/>
</dbReference>
<dbReference type="Bgee" id="ENSG00000105197">
    <property type="expression patterns" value="Expressed in left testis and 175 other cell types or tissues"/>
</dbReference>
<dbReference type="ExpressionAtlas" id="Q3ZCQ8">
    <property type="expression patterns" value="baseline and differential"/>
</dbReference>
<dbReference type="GO" id="GO:0005783">
    <property type="term" value="C:endoplasmic reticulum"/>
    <property type="evidence" value="ECO:0000314"/>
    <property type="project" value="FlyBase"/>
</dbReference>
<dbReference type="GO" id="GO:0005794">
    <property type="term" value="C:Golgi apparatus"/>
    <property type="evidence" value="ECO:0000314"/>
    <property type="project" value="FlyBase"/>
</dbReference>
<dbReference type="GO" id="GO:0005743">
    <property type="term" value="C:mitochondrial inner membrane"/>
    <property type="evidence" value="ECO:0000314"/>
    <property type="project" value="UniProtKB"/>
</dbReference>
<dbReference type="GO" id="GO:0005739">
    <property type="term" value="C:mitochondrion"/>
    <property type="evidence" value="ECO:0000314"/>
    <property type="project" value="HPA"/>
</dbReference>
<dbReference type="GO" id="GO:0016607">
    <property type="term" value="C:nuclear speck"/>
    <property type="evidence" value="ECO:0000314"/>
    <property type="project" value="UniProtKB"/>
</dbReference>
<dbReference type="GO" id="GO:0005654">
    <property type="term" value="C:nucleoplasm"/>
    <property type="evidence" value="ECO:0000314"/>
    <property type="project" value="HPA"/>
</dbReference>
<dbReference type="GO" id="GO:0005744">
    <property type="term" value="C:TIM23 mitochondrial import inner membrane translocase complex"/>
    <property type="evidence" value="ECO:0000314"/>
    <property type="project" value="FlyBase"/>
</dbReference>
<dbReference type="GO" id="GO:0140608">
    <property type="term" value="F:cysteine-type endopeptidase activator activity"/>
    <property type="evidence" value="ECO:0000314"/>
    <property type="project" value="FlyBase"/>
</dbReference>
<dbReference type="GO" id="GO:0005134">
    <property type="term" value="F:interleukin-2 receptor binding"/>
    <property type="evidence" value="ECO:0000314"/>
    <property type="project" value="MGI"/>
</dbReference>
<dbReference type="GO" id="GO:0004721">
    <property type="term" value="F:phosphoprotein phosphatase activity"/>
    <property type="evidence" value="ECO:0000314"/>
    <property type="project" value="MGI"/>
</dbReference>
<dbReference type="GO" id="GO:0004722">
    <property type="term" value="F:protein serine/threonine phosphatase activity"/>
    <property type="evidence" value="ECO:0000314"/>
    <property type="project" value="UniProtKB"/>
</dbReference>
<dbReference type="GO" id="GO:0004725">
    <property type="term" value="F:protein tyrosine phosphatase activity"/>
    <property type="evidence" value="ECO:0000314"/>
    <property type="project" value="UniProtKB"/>
</dbReference>
<dbReference type="GO" id="GO:0043021">
    <property type="term" value="F:ribonucleoprotein complex binding"/>
    <property type="evidence" value="ECO:0000314"/>
    <property type="project" value="UniProtKB"/>
</dbReference>
<dbReference type="GO" id="GO:0003723">
    <property type="term" value="F:RNA binding"/>
    <property type="evidence" value="ECO:0007669"/>
    <property type="project" value="UniProtKB-KW"/>
</dbReference>
<dbReference type="GO" id="GO:0006886">
    <property type="term" value="P:intracellular protein transport"/>
    <property type="evidence" value="ECO:0000303"/>
    <property type="project" value="ComplexPortal"/>
</dbReference>
<dbReference type="GO" id="GO:0007006">
    <property type="term" value="P:mitochondrial membrane organization"/>
    <property type="evidence" value="ECO:0000315"/>
    <property type="project" value="UniProtKB"/>
</dbReference>
<dbReference type="GO" id="GO:0006470">
    <property type="term" value="P:protein dephosphorylation"/>
    <property type="evidence" value="ECO:0000314"/>
    <property type="project" value="UniProtKB"/>
</dbReference>
<dbReference type="GO" id="GO:0030150">
    <property type="term" value="P:protein import into mitochondrial matrix"/>
    <property type="evidence" value="ECO:0000314"/>
    <property type="project" value="UniProtKB"/>
</dbReference>
<dbReference type="GO" id="GO:0001836">
    <property type="term" value="P:release of cytochrome c from mitochondria"/>
    <property type="evidence" value="ECO:0000314"/>
    <property type="project" value="MGI"/>
</dbReference>
<dbReference type="CDD" id="cd07521">
    <property type="entry name" value="HAD_FCP1-like"/>
    <property type="match status" value="1"/>
</dbReference>
<dbReference type="FunFam" id="3.40.50.1000:FF:000019">
    <property type="entry name" value="Mitochondrial import inner membrane translocase subunit TIM50"/>
    <property type="match status" value="1"/>
</dbReference>
<dbReference type="Gene3D" id="3.40.50.1000">
    <property type="entry name" value="HAD superfamily/HAD-like"/>
    <property type="match status" value="1"/>
</dbReference>
<dbReference type="InterPro" id="IPR004274">
    <property type="entry name" value="FCP1_dom"/>
</dbReference>
<dbReference type="InterPro" id="IPR036412">
    <property type="entry name" value="HAD-like_sf"/>
</dbReference>
<dbReference type="InterPro" id="IPR023214">
    <property type="entry name" value="HAD_sf"/>
</dbReference>
<dbReference type="InterPro" id="IPR050365">
    <property type="entry name" value="TIM50"/>
</dbReference>
<dbReference type="PANTHER" id="PTHR12210">
    <property type="entry name" value="DULLARD PROTEIN PHOSPHATASE"/>
    <property type="match status" value="1"/>
</dbReference>
<dbReference type="Pfam" id="PF03031">
    <property type="entry name" value="NIF"/>
    <property type="match status" value="1"/>
</dbReference>
<dbReference type="SMART" id="SM00577">
    <property type="entry name" value="CPDc"/>
    <property type="match status" value="1"/>
</dbReference>
<dbReference type="SUPFAM" id="SSF56784">
    <property type="entry name" value="HAD-like"/>
    <property type="match status" value="1"/>
</dbReference>
<dbReference type="PROSITE" id="PS50969">
    <property type="entry name" value="FCP1"/>
    <property type="match status" value="1"/>
</dbReference>
<sequence length="353" mass="39646">MAASAAVFSRLRSGLRLGSRGLCTRLATPPRRAPDQAAEIGSRGSTKAQGPQQQPGSEGPSYAKKVALWLAGLLGAGGTVSVVYIFGNNPVDENGAKIPDEFDNDPILVQQLRRTYKYFKDYRQMIIEPTSPCLLPDPLQEPYYQPPYTLVLELTGVLLHPEWSLATGWRFKKRPGIETLFQQLAPLYEIVIFTSETGMTAFPLIDSVDPHGFISYRLFRDATRYMDGHHVKDISCLNRDPARVVVVDCKKEAFRLQPYNGVALRPWDGNSDDRVLLDLSAFLKTIALNGVEDVRTVLEHYALEDDPLAAFKQRQSRLEQEEQQRLAELSKSNKQNLFLGSLTSRLWPRSKQP</sequence>
<accession>Q3ZCQ8</accession>
<accession>Q330K1</accession>
<accession>Q6QA00</accession>
<accession>Q96FJ5</accession>
<accession>Q96GY2</accession>
<accession>Q9H370</accession>
<feature type="transit peptide" description="Mitochondrion" evidence="1">
    <location>
        <begin position="1"/>
        <end position="44"/>
    </location>
</feature>
<feature type="chain" id="PRO_0000043115" description="Mitochondrial import inner membrane translocase subunit TIM50">
    <location>
        <begin position="45"/>
        <end position="353"/>
    </location>
</feature>
<feature type="topological domain" description="Mitochondrial matrix" evidence="1">
    <location>
        <begin position="45"/>
        <end position="65"/>
    </location>
</feature>
<feature type="transmembrane region" description="Helical" evidence="1">
    <location>
        <begin position="66"/>
        <end position="86"/>
    </location>
</feature>
<feature type="topological domain" description="Mitochondrial intermembrane" evidence="1">
    <location>
        <begin position="87"/>
        <end position="353"/>
    </location>
</feature>
<feature type="domain" description="FCP1 homology" evidence="2">
    <location>
        <begin position="143"/>
        <end position="286"/>
    </location>
</feature>
<feature type="region of interest" description="Disordered" evidence="3">
    <location>
        <begin position="25"/>
        <end position="60"/>
    </location>
</feature>
<feature type="compositionally biased region" description="Low complexity" evidence="3">
    <location>
        <begin position="49"/>
        <end position="60"/>
    </location>
</feature>
<feature type="modified residue" description="Phosphoserine" evidence="15">
    <location>
        <position position="45"/>
    </location>
</feature>
<feature type="modified residue" description="Phosphoserine" evidence="15">
    <location>
        <position position="341"/>
    </location>
</feature>
<feature type="splice variant" id="VSP_047682" description="In isoform 3." evidence="12 13">
    <original>MAASAAVFSRL</original>
    <variation>MVPRFLMSSTM</variation>
    <location>
        <begin position="1"/>
        <end position="11"/>
    </location>
</feature>
<feature type="splice variant" id="VSP_016389" description="In isoform 2." evidence="14">
    <original>M</original>
    <variation>MASALSLGNKCDPFLRCVLCRGGGALQGPRGRGPDDFESQLSPPGSARRLVRSKRACGNPPDAFGLSRASVHPPLPRVSIGCSSGPGRAKRERVGGAAWRQRKM</variation>
    <location>
        <position position="1"/>
    </location>
</feature>
<feature type="splice variant" id="VSP_047683" description="In isoform 3." evidence="12 13">
    <location>
        <begin position="12"/>
        <end position="124"/>
    </location>
</feature>
<feature type="sequence variant" id="VAR_090172" description="In MGCA9; pathogenic." evidence="8">
    <location>
        <begin position="9"/>
        <end position="353"/>
    </location>
</feature>
<feature type="sequence variant" id="VAR_090173" description="In MGCA9; likely pathogenic; dbSNP:rs776019250." evidence="8">
    <original>G</original>
    <variation>A</variation>
    <location>
        <position position="87"/>
    </location>
</feature>
<feature type="sequence variant" id="VAR_090174" description="In MGCA9; likely pathogenic; severely decreased protein abundance in homozygous patient cells; results in reduced protein import into mitochondrial matrix; dbSNP:rs765887398." evidence="11">
    <original>R</original>
    <variation>C</variation>
    <location>
        <position position="113"/>
    </location>
</feature>
<feature type="sequence variant" id="VAR_090175" description="In MGCA9; uncertain significance; dbSNP:rs778355943." evidence="9">
    <original>R</original>
    <variation>Q</variation>
    <location>
        <position position="114"/>
    </location>
</feature>
<feature type="sequence variant" id="VAR_078568" description="In MGCA9; uncertain significance; dbSNP:rs1300848445." evidence="7">
    <original>R</original>
    <variation>W</variation>
    <location>
        <position position="114"/>
    </location>
</feature>
<feature type="sequence variant" id="VAR_078569" description="In MGCA9; uncertain significance; dbSNP:rs1244226820." evidence="7 10">
    <original>T</original>
    <variation>M</variation>
    <location>
        <position position="149"/>
    </location>
</feature>
<feature type="sequence variant" id="VAR_090176" description="In MGCA9; uncertain significance; dbSNP:rs797044891." evidence="9">
    <original>G</original>
    <variation>S</variation>
    <location>
        <position position="269"/>
    </location>
</feature>
<evidence type="ECO:0000255" key="1"/>
<evidence type="ECO:0000255" key="2">
    <source>
        <dbReference type="PROSITE-ProRule" id="PRU00336"/>
    </source>
</evidence>
<evidence type="ECO:0000256" key="3">
    <source>
        <dbReference type="SAM" id="MobiDB-lite"/>
    </source>
</evidence>
<evidence type="ECO:0000269" key="4">
    <source>
    </source>
</evidence>
<evidence type="ECO:0000269" key="5">
    <source>
    </source>
</evidence>
<evidence type="ECO:0000269" key="6">
    <source>
    </source>
</evidence>
<evidence type="ECO:0000269" key="7">
    <source>
    </source>
</evidence>
<evidence type="ECO:0000269" key="8">
    <source>
    </source>
</evidence>
<evidence type="ECO:0000269" key="9">
    <source>
    </source>
</evidence>
<evidence type="ECO:0000269" key="10">
    <source>
    </source>
</evidence>
<evidence type="ECO:0000269" key="11">
    <source>
    </source>
</evidence>
<evidence type="ECO:0000303" key="12">
    <source>
    </source>
</evidence>
<evidence type="ECO:0000303" key="13">
    <source ref="2"/>
</evidence>
<evidence type="ECO:0000305" key="14"/>
<evidence type="ECO:0007744" key="15">
    <source>
    </source>
</evidence>
<reference key="1">
    <citation type="journal article" date="2004" name="J. Biol. Chem.">
        <title>Tim50, a component of the mitochondrial translocator, regulates mitochondrial integrity and cell death.</title>
        <authorList>
            <person name="Guo Y."/>
            <person name="Cheong N."/>
            <person name="Zhang Z."/>
            <person name="De Rose R."/>
            <person name="Deng Y."/>
            <person name="Farber S.A."/>
            <person name="Fernandes-Alnemri T."/>
            <person name="Alnemri E.S."/>
        </authorList>
    </citation>
    <scope>NUCLEOTIDE SEQUENCE [MRNA] (ISOFORM 1)</scope>
    <scope>FUNCTION</scope>
    <scope>SUBCELLULAR LOCATION</scope>
    <scope>TISSUE SPECIFICITY</scope>
    <scope>INTERACTION WITH TIMM23</scope>
</reference>
<reference key="2">
    <citation type="submission" date="2003-10" db="EMBL/GenBank/DDBJ databases">
        <title>Cloning of a novel splice variant of TIM50L.</title>
        <authorList>
            <person name="Zheng H."/>
            <person name="Xie Y."/>
            <person name="Mao Y."/>
        </authorList>
    </citation>
    <scope>NUCLEOTIDE SEQUENCE [MRNA] (ISOFORM 3)</scope>
</reference>
<reference key="3">
    <citation type="journal article" date="2004" name="Nature">
        <title>The DNA sequence and biology of human chromosome 19.</title>
        <authorList>
            <person name="Grimwood J."/>
            <person name="Gordon L.A."/>
            <person name="Olsen A.S."/>
            <person name="Terry A."/>
            <person name="Schmutz J."/>
            <person name="Lamerdin J.E."/>
            <person name="Hellsten U."/>
            <person name="Goodstein D."/>
            <person name="Couronne O."/>
            <person name="Tran-Gyamfi M."/>
            <person name="Aerts A."/>
            <person name="Altherr M."/>
            <person name="Ashworth L."/>
            <person name="Bajorek E."/>
            <person name="Black S."/>
            <person name="Branscomb E."/>
            <person name="Caenepeel S."/>
            <person name="Carrano A.V."/>
            <person name="Caoile C."/>
            <person name="Chan Y.M."/>
            <person name="Christensen M."/>
            <person name="Cleland C.A."/>
            <person name="Copeland A."/>
            <person name="Dalin E."/>
            <person name="Dehal P."/>
            <person name="Denys M."/>
            <person name="Detter J.C."/>
            <person name="Escobar J."/>
            <person name="Flowers D."/>
            <person name="Fotopulos D."/>
            <person name="Garcia C."/>
            <person name="Georgescu A.M."/>
            <person name="Glavina T."/>
            <person name="Gomez M."/>
            <person name="Gonzales E."/>
            <person name="Groza M."/>
            <person name="Hammon N."/>
            <person name="Hawkins T."/>
            <person name="Haydu L."/>
            <person name="Ho I."/>
            <person name="Huang W."/>
            <person name="Israni S."/>
            <person name="Jett J."/>
            <person name="Kadner K."/>
            <person name="Kimball H."/>
            <person name="Kobayashi A."/>
            <person name="Larionov V."/>
            <person name="Leem S.-H."/>
            <person name="Lopez F."/>
            <person name="Lou Y."/>
            <person name="Lowry S."/>
            <person name="Malfatti S."/>
            <person name="Martinez D."/>
            <person name="McCready P.M."/>
            <person name="Medina C."/>
            <person name="Morgan J."/>
            <person name="Nelson K."/>
            <person name="Nolan M."/>
            <person name="Ovcharenko I."/>
            <person name="Pitluck S."/>
            <person name="Pollard M."/>
            <person name="Popkie A.P."/>
            <person name="Predki P."/>
            <person name="Quan G."/>
            <person name="Ramirez L."/>
            <person name="Rash S."/>
            <person name="Retterer J."/>
            <person name="Rodriguez A."/>
            <person name="Rogers S."/>
            <person name="Salamov A."/>
            <person name="Salazar A."/>
            <person name="She X."/>
            <person name="Smith D."/>
            <person name="Slezak T."/>
            <person name="Solovyev V."/>
            <person name="Thayer N."/>
            <person name="Tice H."/>
            <person name="Tsai M."/>
            <person name="Ustaszewska A."/>
            <person name="Vo N."/>
            <person name="Wagner M."/>
            <person name="Wheeler J."/>
            <person name="Wu K."/>
            <person name="Xie G."/>
            <person name="Yang J."/>
            <person name="Dubchak I."/>
            <person name="Furey T.S."/>
            <person name="DeJong P."/>
            <person name="Dickson M."/>
            <person name="Gordon D."/>
            <person name="Eichler E.E."/>
            <person name="Pennacchio L.A."/>
            <person name="Richardson P."/>
            <person name="Stubbs L."/>
            <person name="Rokhsar D.S."/>
            <person name="Myers R.M."/>
            <person name="Rubin E.M."/>
            <person name="Lucas S.M."/>
        </authorList>
    </citation>
    <scope>NUCLEOTIDE SEQUENCE [LARGE SCALE GENOMIC DNA]</scope>
</reference>
<reference key="4">
    <citation type="journal article" date="2004" name="Genome Res.">
        <title>The status, quality, and expansion of the NIH full-length cDNA project: the Mammalian Gene Collection (MGC).</title>
        <authorList>
            <consortium name="The MGC Project Team"/>
        </authorList>
    </citation>
    <scope>NUCLEOTIDE SEQUENCE [LARGE SCALE MRNA] (ISOFORMS 1 AND 3)</scope>
    <scope>PARTIAL NUCLEOTIDE SEQUENCE [LARGE SCALE MRNA] (ISOFORM 2)</scope>
    <source>
        <tissue>Brain</tissue>
        <tissue>Eye</tissue>
        <tissue>Pancreas</tissue>
    </source>
</reference>
<reference key="5">
    <citation type="submission" date="1999-02" db="EMBL/GenBank/DDBJ databases">
        <title>Functional prediction of the coding sequences of 75 new genes deduced by analysis of cDNA clones from human fetal liver.</title>
        <authorList>
            <person name="Zhang C."/>
            <person name="Yu Y."/>
            <person name="Zhang S."/>
            <person name="Wei H."/>
            <person name="Bi J."/>
            <person name="Zhou G."/>
            <person name="Dong C."/>
            <person name="Zai Y."/>
            <person name="Xu W."/>
            <person name="Gao F."/>
            <person name="Liu M."/>
            <person name="He F."/>
        </authorList>
    </citation>
    <scope>NUCLEOTIDE SEQUENCE [LARGE SCALE MRNA] OF 68-353</scope>
    <source>
        <tissue>Fetal liver</tissue>
    </source>
</reference>
<reference key="6">
    <citation type="submission" date="2005-06" db="UniProtKB">
        <authorList>
            <person name="Bienvenut W.V."/>
        </authorList>
    </citation>
    <scope>PROTEIN SEQUENCE OF 98-113; 275-284; 285-295 AND 335-345</scope>
    <scope>IDENTIFICATION BY MASS SPECTROMETRY</scope>
    <source>
        <tissue>B-cell lymphoma</tissue>
    </source>
</reference>
<reference key="7">
    <citation type="submission" date="2007-03" db="UniProtKB">
        <authorList>
            <person name="Lubec G."/>
            <person name="Afjehi-Sadat L."/>
        </authorList>
    </citation>
    <scope>PROTEIN SEQUENCE OF 98-113</scope>
    <scope>IDENTIFICATION BY MASS SPECTROMETRY</scope>
    <source>
        <tissue>Brain</tissue>
        <tissue>Cajal-Retzius cell</tissue>
    </source>
</reference>
<reference key="8">
    <citation type="journal article" date="2003" name="Nature">
        <title>Proteomic characterization of the human centrosome by protein correlation profiling.</title>
        <authorList>
            <person name="Andersen J.S."/>
            <person name="Wilkinson C.J."/>
            <person name="Mayor T."/>
            <person name="Mortensen P."/>
            <person name="Nigg E.A."/>
            <person name="Mann M."/>
        </authorList>
    </citation>
    <scope>IDENTIFICATION BY MASS SPECTROMETRY</scope>
    <source>
        <tissue>Lymphoblast</tissue>
    </source>
</reference>
<reference key="9">
    <citation type="journal article" date="2005" name="BMC Cell Biol.">
        <title>Tim50a, a nuclear isoform of the mitochondrial Tim50, interacts with proteins involved in snRNP biogenesis.</title>
        <authorList>
            <person name="Xu H."/>
            <person name="Somers Z.B."/>
            <person name="Robinson M.L. II"/>
            <person name="Hebert M.D."/>
        </authorList>
    </citation>
    <scope>ALTERNATIVE SPLICING (ISOFORM 2)</scope>
    <scope>FUNCTION (ISOFORM 2)</scope>
    <scope>RNA-BINDING (ISOFORM 2)</scope>
    <scope>SUBCELLULAR LOCATION (ISOFORM 2)</scope>
    <scope>TISSUE SPECIFICITY</scope>
    <scope>INTERACTION WITH COIL</scope>
</reference>
<reference key="10">
    <citation type="journal article" date="2011" name="BMC Syst. Biol.">
        <title>Initial characterization of the human central proteome.</title>
        <authorList>
            <person name="Burkard T.R."/>
            <person name="Planyavsky M."/>
            <person name="Kaupe I."/>
            <person name="Breitwieser F.P."/>
            <person name="Buerckstuemmer T."/>
            <person name="Bennett K.L."/>
            <person name="Superti-Furga G."/>
            <person name="Colinge J."/>
        </authorList>
    </citation>
    <scope>IDENTIFICATION BY MASS SPECTROMETRY [LARGE SCALE ANALYSIS]</scope>
</reference>
<reference key="11">
    <citation type="journal article" date="2013" name="Hum. Mol. Genet.">
        <title>Methylation-controlled J-protein MCJ acts in the import of proteins into human mitochondria.</title>
        <authorList>
            <person name="Schusdziarra C."/>
            <person name="Blamowska M."/>
            <person name="Azem A."/>
            <person name="Hell K."/>
        </authorList>
    </citation>
    <scope>INTERACTION WITH DNAJC15</scope>
</reference>
<reference key="12">
    <citation type="journal article" date="2013" name="J. Proteome Res.">
        <title>Toward a comprehensive characterization of a human cancer cell phosphoproteome.</title>
        <authorList>
            <person name="Zhou H."/>
            <person name="Di Palma S."/>
            <person name="Preisinger C."/>
            <person name="Peng M."/>
            <person name="Polat A.N."/>
            <person name="Heck A.J."/>
            <person name="Mohammed S."/>
        </authorList>
    </citation>
    <scope>PHOSPHORYLATION [LARGE SCALE ANALYSIS] AT SER-45 AND SER-341</scope>
    <scope>IDENTIFICATION BY MASS SPECTROMETRY [LARGE SCALE ANALYSIS]</scope>
    <source>
        <tissue>Erythroleukemia</tissue>
    </source>
</reference>
<reference key="13">
    <citation type="journal article" date="2015" name="Proteomics">
        <title>N-terminome analysis of the human mitochondrial proteome.</title>
        <authorList>
            <person name="Vaca Jacome A.S."/>
            <person name="Rabilloud T."/>
            <person name="Schaeffer-Reiss C."/>
            <person name="Rompais M."/>
            <person name="Ayoub D."/>
            <person name="Lane L."/>
            <person name="Bairoch A."/>
            <person name="Van Dorsselaer A."/>
            <person name="Carapito C."/>
        </authorList>
    </citation>
    <scope>IDENTIFICATION BY MASS SPECTROMETRY [LARGE SCALE ANALYSIS]</scope>
</reference>
<reference key="14">
    <citation type="journal article" date="2017" name="Clin. Genet.">
        <title>Mitochondrial epileptic encephalopathy, 3-methylglutaconic aciduria and variable complex V deficiency associated with TIMM50 mutations.</title>
        <authorList>
            <consortium name="NISC Intramural Sequencing"/>
            <person name="Shahrour M.A."/>
            <person name="Staretz-Chacham O."/>
            <person name="Dayan D."/>
            <person name="Stephen J."/>
            <person name="Weech A."/>
            <person name="Damseh N."/>
            <person name="Pri Chen H."/>
            <person name="Edvardson S."/>
            <person name="Mazaheri S."/>
            <person name="Saada A."/>
            <person name="Hershkovitz E."/>
            <person name="Shaag A."/>
            <person name="Huizing M."/>
            <person name="Abu-Libdeh B."/>
            <person name="Gahl W.A."/>
            <person name="Azem A."/>
            <person name="Anikster Y."/>
            <person name="Vilboux T."/>
            <person name="Elpeleg O."/>
            <person name="Malicdan M.C."/>
        </authorList>
    </citation>
    <scope>VARIANTS MGCA9 TRP-114 AND MET-149</scope>
    <scope>INVOLVEMENT IN MGCA9</scope>
</reference>
<reference key="15">
    <citation type="journal article" date="2018" name="EMBO Mol. Med.">
        <title>Mutations in TIMM50 compromise cell survival in OxPhos-dependent metabolic conditions.</title>
        <authorList>
            <person name="Reyes A."/>
            <person name="Melchionda L."/>
            <person name="Burlina A."/>
            <person name="Robinson A.J."/>
            <person name="Ghezzi D."/>
            <person name="Zeviani M."/>
        </authorList>
    </citation>
    <scope>VARIANTS MGCA9 9-SER--PRO-353 DEL AND ALA-87</scope>
    <scope>INVOLVEMENT IN MGCA9</scope>
    <scope>FUNCTION</scope>
    <scope>SUBUNIT</scope>
</reference>
<reference key="16">
    <citation type="journal article" date="2019" name="Hum. Mutat.">
        <title>Mutations in TIMM50 cause severe mitochondrial dysfunction by targeting key aspects of mitochondrial physiology.</title>
        <authorList>
            <person name="Tort F."/>
            <person name="Ugarteburu O."/>
            <person name="Texido L."/>
            <person name="Gea-Sorli S."/>
            <person name="Garcia-Villoria J."/>
            <person name="Ferrer-Cortes X."/>
            <person name="Arias A."/>
            <person name="Matalonga L."/>
            <person name="Gort L."/>
            <person name="Ferrer I."/>
            <person name="Guitart-Mampel M."/>
            <person name="Garrabou G."/>
            <person name="Vaz F.M."/>
            <person name="Pristoupilova A."/>
            <person name="Rodriguez M.I.E."/>
            <person name="Beltran S."/>
            <person name="Cardellach F."/>
            <person name="Wanders R.J."/>
            <person name="Fillat C."/>
            <person name="Garcia-Silva M.T."/>
            <person name="Ribes A."/>
        </authorList>
    </citation>
    <scope>VARIANTS MGCA9 GLN-114 AND SER-269</scope>
    <scope>INVOLVEMENT IN MGCA9</scope>
</reference>
<reference key="17">
    <citation type="journal article" date="2020" name="Clin. Genet.">
        <title>Complete resolution of epileptic spasms with vigabatrin in a patient with 3-methylglutaconic aciduria caused by TIMM50 gene mutation.</title>
        <authorList>
            <person name="Mir A."/>
            <person name="Hadab S."/>
            <person name="Sammak M."/>
            <person name="Alhazmi R."/>
            <person name="Housawi Y."/>
            <person name="Bashir S."/>
        </authorList>
    </citation>
    <scope>VARIANT MGCA9 MET-149</scope>
    <scope>INVOLVEMENT IN MGCA9</scope>
</reference>
<reference key="18">
    <citation type="journal article" date="2024" name="Mol. Cell. Biol.">
        <title>Reduced protein import via TIM23 sort drives disease pathology in TIMM50-associated mitochondrial disease.</title>
        <authorList>
            <person name="Crameri J.J."/>
            <person name="Palmer C.S."/>
            <person name="Stait T."/>
            <person name="Jackson T.D."/>
            <person name="Lynch M."/>
            <person name="Sinclair A."/>
            <person name="Frajman L.E."/>
            <person name="Compton A.G."/>
            <person name="Coman D."/>
            <person name="Thorburn D.R."/>
            <person name="Frazier A.E."/>
            <person name="Stojanovski D."/>
        </authorList>
    </citation>
    <scope>VARIANT MGCA9 CYS-113</scope>
    <scope>CHARACTERIZATION OF VARIANT MGCA9 CYS-113</scope>
    <scope>FUNCTION</scope>
    <scope>SUBUNIT</scope>
</reference>
<comment type="function">
    <text evidence="4 8 11">Essential component of the TIM23 complex, a complex that mediates the translocation of transit peptide-containing proteins across the mitochondrial inner membrane (PubMed:30190335, PubMed:38828998). Has some phosphatase activity in vitro; however such activity may not be relevant in vivo.</text>
</comment>
<comment type="function">
    <molecule>Isoform 2</molecule>
    <text evidence="5">May participate in the release of snRNPs and SMN from the Cajal body.</text>
</comment>
<comment type="subunit">
    <text evidence="4 6 8 11">Component of the TIM23 complex at least composed of TIMM23, TIMM17 (TIMM17A or TIMM17B) and TIMM50; within this complex, directly interacts with TIMM23 (PubMed:15044455, PubMed:30190335, PubMed:38828998). The complex interacts with the TIMM44 component of the PAM complex and with DNAJC15 (PubMed:23263864).</text>
</comment>
<comment type="subunit">
    <molecule>Isoform 2</molecule>
    <text evidence="5">Interacts with COIL and snRNPs (PubMed:16008839).</text>
</comment>
<comment type="interaction">
    <interactant intactId="EBI-355175">
        <id>Q3ZCQ8</id>
    </interactant>
    <interactant intactId="EBI-365961">
        <id>P10398</id>
        <label>ARAF</label>
    </interactant>
    <organismsDiffer>false</organismsDiffer>
    <experiments>4</experiments>
</comment>
<comment type="interaction">
    <interactant intactId="EBI-355175">
        <id>Q3ZCQ8</id>
    </interactant>
    <interactant intactId="EBI-365996">
        <id>P04049</id>
        <label>RAF1</label>
    </interactant>
    <organismsDiffer>false</organismsDiffer>
    <experiments>7</experiments>
</comment>
<comment type="subcellular location">
    <subcellularLocation>
        <location evidence="4">Mitochondrion inner membrane</location>
        <topology evidence="4">Single-pass membrane protein</topology>
    </subcellularLocation>
</comment>
<comment type="subcellular location">
    <molecule>Isoform 2</molecule>
    <subcellularLocation>
        <location evidence="5">Nucleus speckle</location>
    </subcellularLocation>
    <text evidence="5">Nuclear and enriched in speckles with snRNPs.</text>
</comment>
<comment type="alternative products">
    <event type="alternative splicing"/>
    <isoform>
        <id>Q3ZCQ8-1</id>
        <name>1</name>
        <sequence type="displayed"/>
    </isoform>
    <isoform>
        <id>Q3ZCQ8-2</id>
        <name>2</name>
        <name>Tim50a</name>
        <sequence type="described" ref="VSP_016389"/>
    </isoform>
    <isoform>
        <id>Q3ZCQ8-3</id>
        <name>3</name>
        <sequence type="described" ref="VSP_047682 VSP_047683"/>
    </isoform>
</comment>
<comment type="tissue specificity">
    <text evidence="4 5">Widely expressed. Expressed at higher level in brain, kidney and liver (at protein level).</text>
</comment>
<comment type="domain">
    <text>The FCP1 homology domain does not contain the canonical D-x-D-x-[TV] active site, suggesting that it probably does not display phosphatase activity in vivo.</text>
</comment>
<comment type="disease" evidence="7 8 9 10 11">
    <disease id="DI-05109">
        <name>3-methylglutaconic aciduria 9</name>
        <acronym>MGCA9</acronym>
        <description>An autosomal recessive disease characterized by early-onset seizures, severely delayed psychomotor development and intellectual disability. Patients have hypotonia or spasticity, and laboratory investigations show increased serum lactate and 3-methylglutaconic aciduria.</description>
        <dbReference type="MIM" id="617698"/>
    </disease>
    <text>The disease is caused by variants affecting the gene represented in this entry.</text>
</comment>
<comment type="similarity">
    <text evidence="14">Belongs to the TIM50 family.</text>
</comment>
<comment type="sequence caution" evidence="14">
    <conflict type="miscellaneous discrepancy">
        <sequence resource="EMBL-CDS" id="AAG35534"/>
    </conflict>
    <text>Chimera.</text>
</comment>
<proteinExistence type="evidence at protein level"/>
<keyword id="KW-0025">Alternative splicing</keyword>
<keyword id="KW-0903">Direct protein sequencing</keyword>
<keyword id="KW-0225">Disease variant</keyword>
<keyword id="KW-0887">Epilepsy</keyword>
<keyword id="KW-0991">Intellectual disability</keyword>
<keyword id="KW-0472">Membrane</keyword>
<keyword id="KW-0496">Mitochondrion</keyword>
<keyword id="KW-0999">Mitochondrion inner membrane</keyword>
<keyword id="KW-0539">Nucleus</keyword>
<keyword id="KW-0597">Phosphoprotein</keyword>
<keyword id="KW-0653">Protein transport</keyword>
<keyword id="KW-1267">Proteomics identification</keyword>
<keyword id="KW-1185">Reference proteome</keyword>
<keyword id="KW-0694">RNA-binding</keyword>
<keyword id="KW-0809">Transit peptide</keyword>
<keyword id="KW-0811">Translocation</keyword>
<keyword id="KW-0812">Transmembrane</keyword>
<keyword id="KW-1133">Transmembrane helix</keyword>
<keyword id="KW-0813">Transport</keyword>
<protein>
    <recommendedName>
        <fullName>Mitochondrial import inner membrane translocase subunit TIM50</fullName>
    </recommendedName>
</protein>